<sequence length="351" mass="38345">MKKKKLLVMAGGTGGHVFPAIAVAQTLQKQEWDICWLGTKDRMEAQLVPKYDIPIRFIQISGLRGKGIKALFNAPFAIFRAVLQAKKIIQEEKPDAVLGMGGYVSGPAGVAAKLCGVPIILHEQNAIAGLTNKLLGKIASCVLQAFPTAFSNAEVVGNPVREDLFEMPNPDIRFSDREEKLRVLVVGGSQGARVLNHTLPKVVAQIADKLEVRHQVGKGAVEEVRQLYGENLEQVKITEFIDNMAEAYAWADVVICRSGALTVCEIAAVGAAAIFVPFQHKDRQQYLNAKYLSDVGAAKIIEQADLTPEILVNSLKNFTRENLLQMALKAKTMSMPNAAQRVAEVIKQYSN</sequence>
<evidence type="ECO:0000255" key="1">
    <source>
        <dbReference type="HAMAP-Rule" id="MF_00033"/>
    </source>
</evidence>
<dbReference type="EC" id="2.4.1.227" evidence="1"/>
<dbReference type="EMBL" id="CP000671">
    <property type="protein sequence ID" value="ABQ98619.1"/>
    <property type="molecule type" value="Genomic_DNA"/>
</dbReference>
<dbReference type="SMR" id="A5UCW8"/>
<dbReference type="CAZy" id="GT28">
    <property type="family name" value="Glycosyltransferase Family 28"/>
</dbReference>
<dbReference type="KEGG" id="hip:CGSHiEE_06360"/>
<dbReference type="HOGENOM" id="CLU_037404_2_0_6"/>
<dbReference type="UniPathway" id="UPA00219"/>
<dbReference type="GO" id="GO:0005886">
    <property type="term" value="C:plasma membrane"/>
    <property type="evidence" value="ECO:0007669"/>
    <property type="project" value="UniProtKB-SubCell"/>
</dbReference>
<dbReference type="GO" id="GO:0051991">
    <property type="term" value="F:UDP-N-acetyl-D-glucosamine:N-acetylmuramoyl-L-alanyl-D-glutamyl-meso-2,6-diaminopimelyl-D-alanyl-D-alanine-diphosphoundecaprenol 4-beta-N-acetylglucosaminlytransferase activity"/>
    <property type="evidence" value="ECO:0007669"/>
    <property type="project" value="RHEA"/>
</dbReference>
<dbReference type="GO" id="GO:0050511">
    <property type="term" value="F:undecaprenyldiphospho-muramoylpentapeptide beta-N-acetylglucosaminyltransferase activity"/>
    <property type="evidence" value="ECO:0007669"/>
    <property type="project" value="UniProtKB-UniRule"/>
</dbReference>
<dbReference type="GO" id="GO:0005975">
    <property type="term" value="P:carbohydrate metabolic process"/>
    <property type="evidence" value="ECO:0007669"/>
    <property type="project" value="InterPro"/>
</dbReference>
<dbReference type="GO" id="GO:0051301">
    <property type="term" value="P:cell division"/>
    <property type="evidence" value="ECO:0007669"/>
    <property type="project" value="UniProtKB-KW"/>
</dbReference>
<dbReference type="GO" id="GO:0071555">
    <property type="term" value="P:cell wall organization"/>
    <property type="evidence" value="ECO:0007669"/>
    <property type="project" value="UniProtKB-KW"/>
</dbReference>
<dbReference type="GO" id="GO:0030259">
    <property type="term" value="P:lipid glycosylation"/>
    <property type="evidence" value="ECO:0007669"/>
    <property type="project" value="UniProtKB-UniRule"/>
</dbReference>
<dbReference type="GO" id="GO:0009252">
    <property type="term" value="P:peptidoglycan biosynthetic process"/>
    <property type="evidence" value="ECO:0007669"/>
    <property type="project" value="UniProtKB-UniRule"/>
</dbReference>
<dbReference type="GO" id="GO:0008360">
    <property type="term" value="P:regulation of cell shape"/>
    <property type="evidence" value="ECO:0007669"/>
    <property type="project" value="UniProtKB-KW"/>
</dbReference>
<dbReference type="CDD" id="cd03785">
    <property type="entry name" value="GT28_MurG"/>
    <property type="match status" value="1"/>
</dbReference>
<dbReference type="Gene3D" id="3.40.50.2000">
    <property type="entry name" value="Glycogen Phosphorylase B"/>
    <property type="match status" value="2"/>
</dbReference>
<dbReference type="HAMAP" id="MF_00033">
    <property type="entry name" value="MurG"/>
    <property type="match status" value="1"/>
</dbReference>
<dbReference type="InterPro" id="IPR006009">
    <property type="entry name" value="GlcNAc_MurG"/>
</dbReference>
<dbReference type="InterPro" id="IPR007235">
    <property type="entry name" value="Glyco_trans_28_C"/>
</dbReference>
<dbReference type="InterPro" id="IPR004276">
    <property type="entry name" value="GlycoTrans_28_N"/>
</dbReference>
<dbReference type="NCBIfam" id="TIGR01133">
    <property type="entry name" value="murG"/>
    <property type="match status" value="1"/>
</dbReference>
<dbReference type="PANTHER" id="PTHR21015:SF22">
    <property type="entry name" value="GLYCOSYLTRANSFERASE"/>
    <property type="match status" value="1"/>
</dbReference>
<dbReference type="PANTHER" id="PTHR21015">
    <property type="entry name" value="UDP-N-ACETYLGLUCOSAMINE--N-ACETYLMURAMYL-(PENTAPEPTIDE) PYROPHOSPHORYL-UNDECAPRENOL N-ACETYLGLUCOSAMINE TRANSFERASE 1"/>
    <property type="match status" value="1"/>
</dbReference>
<dbReference type="Pfam" id="PF04101">
    <property type="entry name" value="Glyco_tran_28_C"/>
    <property type="match status" value="1"/>
</dbReference>
<dbReference type="Pfam" id="PF03033">
    <property type="entry name" value="Glyco_transf_28"/>
    <property type="match status" value="1"/>
</dbReference>
<dbReference type="SUPFAM" id="SSF53756">
    <property type="entry name" value="UDP-Glycosyltransferase/glycogen phosphorylase"/>
    <property type="match status" value="1"/>
</dbReference>
<comment type="function">
    <text evidence="1">Cell wall formation. Catalyzes the transfer of a GlcNAc subunit on undecaprenyl-pyrophosphoryl-MurNAc-pentapeptide (lipid intermediate I) to form undecaprenyl-pyrophosphoryl-MurNAc-(pentapeptide)GlcNAc (lipid intermediate II).</text>
</comment>
<comment type="catalytic activity">
    <reaction evidence="1">
        <text>di-trans,octa-cis-undecaprenyl diphospho-N-acetyl-alpha-D-muramoyl-L-alanyl-D-glutamyl-meso-2,6-diaminopimeloyl-D-alanyl-D-alanine + UDP-N-acetyl-alpha-D-glucosamine = di-trans,octa-cis-undecaprenyl diphospho-[N-acetyl-alpha-D-glucosaminyl-(1-&gt;4)]-N-acetyl-alpha-D-muramoyl-L-alanyl-D-glutamyl-meso-2,6-diaminopimeloyl-D-alanyl-D-alanine + UDP + H(+)</text>
        <dbReference type="Rhea" id="RHEA:31227"/>
        <dbReference type="ChEBI" id="CHEBI:15378"/>
        <dbReference type="ChEBI" id="CHEBI:57705"/>
        <dbReference type="ChEBI" id="CHEBI:58223"/>
        <dbReference type="ChEBI" id="CHEBI:61387"/>
        <dbReference type="ChEBI" id="CHEBI:61388"/>
        <dbReference type="EC" id="2.4.1.227"/>
    </reaction>
</comment>
<comment type="pathway">
    <text evidence="1">Cell wall biogenesis; peptidoglycan biosynthesis.</text>
</comment>
<comment type="subcellular location">
    <subcellularLocation>
        <location evidence="1">Cell inner membrane</location>
        <topology evidence="1">Peripheral membrane protein</topology>
        <orientation evidence="1">Cytoplasmic side</orientation>
    </subcellularLocation>
</comment>
<comment type="similarity">
    <text evidence="1">Belongs to the glycosyltransferase 28 family. MurG subfamily.</text>
</comment>
<organism>
    <name type="scientific">Haemophilus influenzae (strain PittEE)</name>
    <dbReference type="NCBI Taxonomy" id="374930"/>
    <lineage>
        <taxon>Bacteria</taxon>
        <taxon>Pseudomonadati</taxon>
        <taxon>Pseudomonadota</taxon>
        <taxon>Gammaproteobacteria</taxon>
        <taxon>Pasteurellales</taxon>
        <taxon>Pasteurellaceae</taxon>
        <taxon>Haemophilus</taxon>
    </lineage>
</organism>
<gene>
    <name evidence="1" type="primary">murG</name>
    <name type="ordered locus">CGSHiEE_06360</name>
</gene>
<proteinExistence type="inferred from homology"/>
<name>MURG_HAEIE</name>
<accession>A5UCW8</accession>
<keyword id="KW-0131">Cell cycle</keyword>
<keyword id="KW-0132">Cell division</keyword>
<keyword id="KW-0997">Cell inner membrane</keyword>
<keyword id="KW-1003">Cell membrane</keyword>
<keyword id="KW-0133">Cell shape</keyword>
<keyword id="KW-0961">Cell wall biogenesis/degradation</keyword>
<keyword id="KW-0328">Glycosyltransferase</keyword>
<keyword id="KW-0472">Membrane</keyword>
<keyword id="KW-0573">Peptidoglycan synthesis</keyword>
<keyword id="KW-0808">Transferase</keyword>
<feature type="chain" id="PRO_1000002653" description="UDP-N-acetylglucosamine--N-acetylmuramyl-(pentapeptide) pyrophosphoryl-undecaprenol N-acetylglucosamine transferase">
    <location>
        <begin position="1"/>
        <end position="351"/>
    </location>
</feature>
<feature type="binding site" evidence="1">
    <location>
        <begin position="13"/>
        <end position="15"/>
    </location>
    <ligand>
        <name>UDP-N-acetyl-alpha-D-glucosamine</name>
        <dbReference type="ChEBI" id="CHEBI:57705"/>
    </ligand>
</feature>
<feature type="binding site" evidence="1">
    <location>
        <position position="125"/>
    </location>
    <ligand>
        <name>UDP-N-acetyl-alpha-D-glucosamine</name>
        <dbReference type="ChEBI" id="CHEBI:57705"/>
    </ligand>
</feature>
<feature type="binding site" evidence="1">
    <location>
        <position position="161"/>
    </location>
    <ligand>
        <name>UDP-N-acetyl-alpha-D-glucosamine</name>
        <dbReference type="ChEBI" id="CHEBI:57705"/>
    </ligand>
</feature>
<feature type="binding site" evidence="1">
    <location>
        <position position="189"/>
    </location>
    <ligand>
        <name>UDP-N-acetyl-alpha-D-glucosamine</name>
        <dbReference type="ChEBI" id="CHEBI:57705"/>
    </ligand>
</feature>
<feature type="binding site" evidence="1">
    <location>
        <position position="241"/>
    </location>
    <ligand>
        <name>UDP-N-acetyl-alpha-D-glucosamine</name>
        <dbReference type="ChEBI" id="CHEBI:57705"/>
    </ligand>
</feature>
<feature type="binding site" evidence="1">
    <location>
        <begin position="260"/>
        <end position="265"/>
    </location>
    <ligand>
        <name>UDP-N-acetyl-alpha-D-glucosamine</name>
        <dbReference type="ChEBI" id="CHEBI:57705"/>
    </ligand>
</feature>
<feature type="binding site" evidence="1">
    <location>
        <position position="285"/>
    </location>
    <ligand>
        <name>UDP-N-acetyl-alpha-D-glucosamine</name>
        <dbReference type="ChEBI" id="CHEBI:57705"/>
    </ligand>
</feature>
<protein>
    <recommendedName>
        <fullName evidence="1">UDP-N-acetylglucosamine--N-acetylmuramyl-(pentapeptide) pyrophosphoryl-undecaprenol N-acetylglucosamine transferase</fullName>
        <ecNumber evidence="1">2.4.1.227</ecNumber>
    </recommendedName>
    <alternativeName>
        <fullName evidence="1">Undecaprenyl-PP-MurNAc-pentapeptide-UDPGlcNAc GlcNAc transferase</fullName>
    </alternativeName>
</protein>
<reference key="1">
    <citation type="journal article" date="2007" name="Genome Biol.">
        <title>Characterization and modeling of the Haemophilus influenzae core and supragenomes based on the complete genomic sequences of Rd and 12 clinical nontypeable strains.</title>
        <authorList>
            <person name="Hogg J.S."/>
            <person name="Hu F.Z."/>
            <person name="Janto B."/>
            <person name="Boissy R."/>
            <person name="Hayes J."/>
            <person name="Keefe R."/>
            <person name="Post J.C."/>
            <person name="Ehrlich G.D."/>
        </authorList>
    </citation>
    <scope>NUCLEOTIDE SEQUENCE [LARGE SCALE GENOMIC DNA]</scope>
    <source>
        <strain>PittEE</strain>
    </source>
</reference>